<accession>N1PZ58</accession>
<organism>
    <name type="scientific">Dothistroma septosporum (strain NZE10 / CBS 128990)</name>
    <name type="common">Red band needle blight fungus</name>
    <name type="synonym">Mycosphaerella pini</name>
    <dbReference type="NCBI Taxonomy" id="675120"/>
    <lineage>
        <taxon>Eukaryota</taxon>
        <taxon>Fungi</taxon>
        <taxon>Dikarya</taxon>
        <taxon>Ascomycota</taxon>
        <taxon>Pezizomycotina</taxon>
        <taxon>Dothideomycetes</taxon>
        <taxon>Dothideomycetidae</taxon>
        <taxon>Mycosphaerellales</taxon>
        <taxon>Mycosphaerellaceae</taxon>
        <taxon>Dothistroma</taxon>
    </lineage>
</organism>
<keyword id="KW-0963">Cytoplasm</keyword>
<keyword id="KW-0539">Nucleus</keyword>
<keyword id="KW-1185">Reference proteome</keyword>
<keyword id="KW-0749">Sporulation</keyword>
<keyword id="KW-0804">Transcription</keyword>
<keyword id="KW-0805">Transcription regulation</keyword>
<comment type="function">
    <text evidence="2 5">Component of the velvet transcription factor complex that controls sexual/asexual developmental ratio in response to light, promoting sexual development in the darkness while stimulating asexual sporulation under illumination (By similarity). The velvet complex hat acts as a global regulator for secondary metabolite gene expression (PubMed:22227160). Controls the expression of the dothistromin gene cluster (PubMed:22227160). Regulates hyphal growth and pigment formation (PubMed:22227160). Acts as a positive regulator of virulence (PubMed:22227160).</text>
</comment>
<comment type="subunit">
    <text evidence="1">Component of the heterotrimeric velvet complex composed of laeA, veA and velB; VeA acting as a bridging protein between laeA and velB (By similarity).</text>
</comment>
<comment type="subcellular location">
    <subcellularLocation>
        <location evidence="2">Nucleus</location>
    </subcellularLocation>
    <subcellularLocation>
        <location evidence="2">Cytoplasm</location>
    </subcellularLocation>
    <text evidence="2">Enriched in the nucleus in the dark (By similarity).</text>
</comment>
<comment type="domain">
    <text evidence="2">The C-terminal PEST domain is a region rich in proline, glutamic acid, serine and threonine residues that is required for the light-dependent regulation of development and secondary metabolism (By similarity).</text>
</comment>
<comment type="disruption phenotype">
    <text evidence="5">Impairs the biosynthesis of secondary metabolites, including dothistromin (PubMed:22227160). Impairs asexual sporulation but shows normal hydrophobicity (PubMed:22227160).</text>
</comment>
<comment type="similarity">
    <text evidence="7">Belongs to the velvet family. VeA subfamily.</text>
</comment>
<evidence type="ECO:0000250" key="1">
    <source>
        <dbReference type="UniProtKB" id="C8VQG9"/>
    </source>
</evidence>
<evidence type="ECO:0000250" key="2">
    <source>
        <dbReference type="UniProtKB" id="C8VTV4"/>
    </source>
</evidence>
<evidence type="ECO:0000255" key="3">
    <source>
        <dbReference type="PROSITE-ProRule" id="PRU01165"/>
    </source>
</evidence>
<evidence type="ECO:0000256" key="4">
    <source>
        <dbReference type="SAM" id="MobiDB-lite"/>
    </source>
</evidence>
<evidence type="ECO:0000269" key="5">
    <source>
    </source>
</evidence>
<evidence type="ECO:0000303" key="6">
    <source>
    </source>
</evidence>
<evidence type="ECO:0000305" key="7"/>
<dbReference type="EMBL" id="KB446536">
    <property type="protein sequence ID" value="EME47645.1"/>
    <property type="molecule type" value="Genomic_DNA"/>
</dbReference>
<dbReference type="SMR" id="N1PZ58"/>
<dbReference type="STRING" id="675120.N1PZ58"/>
<dbReference type="EnsemblFungi" id="EME47645">
    <property type="protein sequence ID" value="EME47645"/>
    <property type="gene ID" value="DOTSEDRAFT_69562"/>
</dbReference>
<dbReference type="eggNOG" id="ENOG502S0HV">
    <property type="taxonomic scope" value="Eukaryota"/>
</dbReference>
<dbReference type="HOGENOM" id="CLU_022491_2_0_1"/>
<dbReference type="OMA" id="NHFVTHR"/>
<dbReference type="OrthoDB" id="5384689at2759"/>
<dbReference type="Proteomes" id="UP000016933">
    <property type="component" value="Unassembled WGS sequence"/>
</dbReference>
<dbReference type="GO" id="GO:0005737">
    <property type="term" value="C:cytoplasm"/>
    <property type="evidence" value="ECO:0007669"/>
    <property type="project" value="UniProtKB-SubCell"/>
</dbReference>
<dbReference type="GO" id="GO:0005634">
    <property type="term" value="C:nucleus"/>
    <property type="evidence" value="ECO:0007669"/>
    <property type="project" value="UniProtKB-SubCell"/>
</dbReference>
<dbReference type="GO" id="GO:0030435">
    <property type="term" value="P:sporulation resulting in formation of a cellular spore"/>
    <property type="evidence" value="ECO:0007669"/>
    <property type="project" value="UniProtKB-KW"/>
</dbReference>
<dbReference type="FunFam" id="2.60.40.3960:FF:000001">
    <property type="entry name" value="Sexual development activator VeA"/>
    <property type="match status" value="1"/>
</dbReference>
<dbReference type="Gene3D" id="2.60.40.3960">
    <property type="entry name" value="Velvet domain"/>
    <property type="match status" value="1"/>
</dbReference>
<dbReference type="InterPro" id="IPR021740">
    <property type="entry name" value="Velvet"/>
</dbReference>
<dbReference type="InterPro" id="IPR037525">
    <property type="entry name" value="Velvet_dom"/>
</dbReference>
<dbReference type="InterPro" id="IPR038491">
    <property type="entry name" value="Velvet_dom_sf"/>
</dbReference>
<dbReference type="PANTHER" id="PTHR33572:SF14">
    <property type="entry name" value="DEVELOPMENTAL AND SECONDARY METABOLISM REGULATOR VEA"/>
    <property type="match status" value="1"/>
</dbReference>
<dbReference type="PANTHER" id="PTHR33572">
    <property type="entry name" value="SPORE DEVELOPMENT REGULATOR VOSA"/>
    <property type="match status" value="1"/>
</dbReference>
<dbReference type="Pfam" id="PF11754">
    <property type="entry name" value="Velvet"/>
    <property type="match status" value="2"/>
</dbReference>
<dbReference type="PROSITE" id="PS51821">
    <property type="entry name" value="VELVET"/>
    <property type="match status" value="1"/>
</dbReference>
<sequence length="611" mass="67573">MNRKTHIPVENETKSSATRTTNDGRAITYEMQVLQQPQRARACGQGAKSSADRRPVDPPPIVELKIFEGEKRDDITYTMHANYFLFATLEQARPIAHARGQDRNTHPVLTGTPVAGMVYLDRPTPAGYFIFPDLSVRHEGEYRLSFSLYEELKNPKDEDKPEEACDAAGGDAHVTHRLEVKSAPFHVYSAKKFPGLTESTHLSRMVAEQGCRVRIRRDVRMRRREPKSGGKDWDEYEEDTAAARARASATPDPSINGYMQTPHGFIEPNPRPRSASNASHQSLGSISRRPSMQEMGQAYHQQPHYGTAPHTPQNGYTQTAPYGPPPGQQYPPNQFVQQQPPMQPPLPQYQPPNYPAPPPPVTAAQQPQPAQSYYNYPAAPPPPQATQVQQYNVSAHAYDSGVQSHRPSIDFPAQDGYRRNSQQIPPTSQPTAYTQPMQPQYAAQMPPAQHYQQPPPPPPSQASQHSSYSSMDLYNSRPAPIEPHHHGNTPASKASFDLPPINTAAMVSNKLEASSPTSVAPTNAYFSGGQTPIDTHKRSYGDVFSNRHHNAPLRQGQRPSYGQGDSLVTGTTMSAADDDDNASSELDPSTLGMHYRRADGRQIQRALPGHA</sequence>
<proteinExistence type="inferred from homology"/>
<protein>
    <recommendedName>
        <fullName evidence="7">Developmental and secondary metabolism regulator veA</fullName>
    </recommendedName>
    <alternativeName>
        <fullName evidence="7">Velvet complex subunit A</fullName>
    </alternativeName>
</protein>
<reference key="1">
    <citation type="journal article" date="2012" name="PLoS Genet.">
        <title>The genomes of the fungal plant pathogens Cladosporium fulvum and Dothistroma septosporum reveal adaptation to different hosts and lifestyles but also signatures of common ancestry.</title>
        <authorList>
            <person name="de Wit P.J.G.M."/>
            <person name="van der Burgt A."/>
            <person name="Oekmen B."/>
            <person name="Stergiopoulos I."/>
            <person name="Abd-Elsalam K.A."/>
            <person name="Aerts A.L."/>
            <person name="Bahkali A.H."/>
            <person name="Beenen H.G."/>
            <person name="Chettri P."/>
            <person name="Cox M.P."/>
            <person name="Datema E."/>
            <person name="de Vries R.P."/>
            <person name="Dhillon B."/>
            <person name="Ganley A.R."/>
            <person name="Griffiths S.A."/>
            <person name="Guo Y."/>
            <person name="Hamelin R.C."/>
            <person name="Henrissat B."/>
            <person name="Kabir M.S."/>
            <person name="Jashni M.K."/>
            <person name="Kema G."/>
            <person name="Klaubauf S."/>
            <person name="Lapidus A."/>
            <person name="Levasseur A."/>
            <person name="Lindquist E."/>
            <person name="Mehrabi R."/>
            <person name="Ohm R.A."/>
            <person name="Owen T.J."/>
            <person name="Salamov A."/>
            <person name="Schwelm A."/>
            <person name="Schijlen E."/>
            <person name="Sun H."/>
            <person name="van den Burg H.A."/>
            <person name="van Ham R.C.H.J."/>
            <person name="Zhang S."/>
            <person name="Goodwin S.B."/>
            <person name="Grigoriev I.V."/>
            <person name="Collemare J."/>
            <person name="Bradshaw R.E."/>
        </authorList>
    </citation>
    <scope>NUCLEOTIDE SEQUENCE [LARGE SCALE GENOMIC DNA]</scope>
    <source>
        <strain>NZE10 / CBS 128990</strain>
    </source>
</reference>
<reference key="2">
    <citation type="journal article" date="2012" name="PLoS Pathog.">
        <title>Diverse lifestyles and strategies of plant pathogenesis encoded in the genomes of eighteen Dothideomycetes fungi.</title>
        <authorList>
            <person name="Ohm R.A."/>
            <person name="Feau N."/>
            <person name="Henrissat B."/>
            <person name="Schoch C.L."/>
            <person name="Horwitz B.A."/>
            <person name="Barry K.W."/>
            <person name="Condon B.J."/>
            <person name="Copeland A.C."/>
            <person name="Dhillon B."/>
            <person name="Glaser F."/>
            <person name="Hesse C.N."/>
            <person name="Kosti I."/>
            <person name="LaButti K."/>
            <person name="Lindquist E.A."/>
            <person name="Lucas S."/>
            <person name="Salamov A.A."/>
            <person name="Bradshaw R.E."/>
            <person name="Ciuffetti L."/>
            <person name="Hamelin R.C."/>
            <person name="Kema G.H.J."/>
            <person name="Lawrence C."/>
            <person name="Scott J.A."/>
            <person name="Spatafora J.W."/>
            <person name="Turgeon B.G."/>
            <person name="de Wit P.J.G.M."/>
            <person name="Zhong S."/>
            <person name="Goodwin S.B."/>
            <person name="Grigoriev I.V."/>
        </authorList>
    </citation>
    <scope>NUCLEOTIDE SEQUENCE [LARGE SCALE GENOMIC DNA]</scope>
    <source>
        <strain>NZE10 / CBS 128990</strain>
    </source>
</reference>
<reference key="3">
    <citation type="journal article" date="2012" name="Fungal Genet. Biol.">
        <title>The veA gene of the pine needle pathogen Dothistroma septosporum regulates sporulation and secondary metabolism.</title>
        <authorList>
            <person name="Chettri P."/>
            <person name="Calvo A.M."/>
            <person name="Cary J.W."/>
            <person name="Dhingra S."/>
            <person name="Guo Y."/>
            <person name="McDougal R.L."/>
            <person name="Bradshaw R.E."/>
        </authorList>
    </citation>
    <scope>FUNCTION</scope>
    <scope>DISRUPTION PHENOTYPE</scope>
</reference>
<name>VEA_DOTSN</name>
<feature type="chain" id="PRO_0000435770" description="Developmental and secondary metabolism regulator veA">
    <location>
        <begin position="1"/>
        <end position="611"/>
    </location>
</feature>
<feature type="domain" description="Velvet" evidence="3">
    <location>
        <begin position="24"/>
        <end position="216"/>
    </location>
</feature>
<feature type="region of interest" description="Disordered" evidence="4">
    <location>
        <begin position="1"/>
        <end position="57"/>
    </location>
</feature>
<feature type="region of interest" description="Disordered" evidence="4">
    <location>
        <begin position="222"/>
        <end position="497"/>
    </location>
</feature>
<feature type="region of interest" description="PEST" evidence="2">
    <location>
        <begin position="455"/>
        <end position="499"/>
    </location>
</feature>
<feature type="region of interest" description="Disordered" evidence="4">
    <location>
        <begin position="511"/>
        <end position="611"/>
    </location>
</feature>
<feature type="short sequence motif" description="Nuclear localization signal" evidence="2">
    <location>
        <begin position="38"/>
        <end position="43"/>
    </location>
</feature>
<feature type="compositionally biased region" description="Polar residues" evidence="4">
    <location>
        <begin position="14"/>
        <end position="23"/>
    </location>
</feature>
<feature type="compositionally biased region" description="Low complexity" evidence="4">
    <location>
        <begin position="242"/>
        <end position="254"/>
    </location>
</feature>
<feature type="compositionally biased region" description="Polar residues" evidence="4">
    <location>
        <begin position="274"/>
        <end position="290"/>
    </location>
</feature>
<feature type="compositionally biased region" description="Low complexity" evidence="4">
    <location>
        <begin position="330"/>
        <end position="340"/>
    </location>
</feature>
<feature type="compositionally biased region" description="Pro residues" evidence="4">
    <location>
        <begin position="341"/>
        <end position="361"/>
    </location>
</feature>
<feature type="compositionally biased region" description="Low complexity" evidence="4">
    <location>
        <begin position="362"/>
        <end position="377"/>
    </location>
</feature>
<feature type="compositionally biased region" description="Polar residues" evidence="4">
    <location>
        <begin position="419"/>
        <end position="434"/>
    </location>
</feature>
<feature type="compositionally biased region" description="Low complexity" evidence="4">
    <location>
        <begin position="435"/>
        <end position="452"/>
    </location>
</feature>
<feature type="compositionally biased region" description="Low complexity" evidence="4">
    <location>
        <begin position="461"/>
        <end position="471"/>
    </location>
</feature>
<feature type="compositionally biased region" description="Polar residues" evidence="4">
    <location>
        <begin position="511"/>
        <end position="533"/>
    </location>
</feature>
<gene>
    <name evidence="6" type="primary">veA</name>
    <name type="ORF">DOTSEDRAFT_69562</name>
</gene>